<reference key="1">
    <citation type="submission" date="2008-01" db="EMBL/GenBank/DDBJ databases">
        <title>Complete sequence of Shewanella halifaxensis HAW-EB4.</title>
        <authorList>
            <consortium name="US DOE Joint Genome Institute"/>
            <person name="Copeland A."/>
            <person name="Lucas S."/>
            <person name="Lapidus A."/>
            <person name="Glavina del Rio T."/>
            <person name="Dalin E."/>
            <person name="Tice H."/>
            <person name="Bruce D."/>
            <person name="Goodwin L."/>
            <person name="Pitluck S."/>
            <person name="Sims D."/>
            <person name="Brettin T."/>
            <person name="Detter J.C."/>
            <person name="Han C."/>
            <person name="Kuske C.R."/>
            <person name="Schmutz J."/>
            <person name="Larimer F."/>
            <person name="Land M."/>
            <person name="Hauser L."/>
            <person name="Kyrpides N."/>
            <person name="Kim E."/>
            <person name="Zhao J.-S."/>
            <person name="Richardson P."/>
        </authorList>
    </citation>
    <scope>NUCLEOTIDE SEQUENCE [LARGE SCALE GENOMIC DNA]</scope>
    <source>
        <strain>HAW-EB4</strain>
    </source>
</reference>
<name>CH10_SHEHH</name>
<protein>
    <recommendedName>
        <fullName evidence="1">Co-chaperonin GroES</fullName>
    </recommendedName>
    <alternativeName>
        <fullName evidence="1">10 kDa chaperonin</fullName>
    </alternativeName>
    <alternativeName>
        <fullName evidence="1">Chaperonin-10</fullName>
        <shortName evidence="1">Cpn10</shortName>
    </alternativeName>
</protein>
<sequence length="96" mass="10205">MNIRPLHDRVIVKRSEVESKSAGGIVLTGSAAEQSSRGEVLAVGNGRILENGNVMPLDVKVGDIVIFNEGYGVKKEKIDGEEVLILSESDLMAVVG</sequence>
<accession>B0TVL4</accession>
<comment type="function">
    <text evidence="1">Together with the chaperonin GroEL, plays an essential role in assisting protein folding. The GroEL-GroES system forms a nano-cage that allows encapsulation of the non-native substrate proteins and provides a physical environment optimized to promote and accelerate protein folding. GroES binds to the apical surface of the GroEL ring, thereby capping the opening of the GroEL channel.</text>
</comment>
<comment type="subunit">
    <text evidence="1">Heptamer of 7 subunits arranged in a ring. Interacts with the chaperonin GroEL.</text>
</comment>
<comment type="subcellular location">
    <subcellularLocation>
        <location evidence="1">Cytoplasm</location>
    </subcellularLocation>
</comment>
<comment type="similarity">
    <text evidence="1">Belongs to the GroES chaperonin family.</text>
</comment>
<feature type="chain" id="PRO_1000082392" description="Co-chaperonin GroES">
    <location>
        <begin position="1"/>
        <end position="96"/>
    </location>
</feature>
<evidence type="ECO:0000255" key="1">
    <source>
        <dbReference type="HAMAP-Rule" id="MF_00580"/>
    </source>
</evidence>
<dbReference type="EMBL" id="CP000931">
    <property type="protein sequence ID" value="ABZ78317.1"/>
    <property type="molecule type" value="Genomic_DNA"/>
</dbReference>
<dbReference type="RefSeq" id="WP_012278835.1">
    <property type="nucleotide sequence ID" value="NC_010334.1"/>
</dbReference>
<dbReference type="SMR" id="B0TVL4"/>
<dbReference type="STRING" id="458817.Shal_3777"/>
<dbReference type="KEGG" id="shl:Shal_3777"/>
<dbReference type="eggNOG" id="COG0234">
    <property type="taxonomic scope" value="Bacteria"/>
</dbReference>
<dbReference type="HOGENOM" id="CLU_132825_1_1_6"/>
<dbReference type="OrthoDB" id="9806791at2"/>
<dbReference type="Proteomes" id="UP000001317">
    <property type="component" value="Chromosome"/>
</dbReference>
<dbReference type="GO" id="GO:0005737">
    <property type="term" value="C:cytoplasm"/>
    <property type="evidence" value="ECO:0007669"/>
    <property type="project" value="UniProtKB-SubCell"/>
</dbReference>
<dbReference type="GO" id="GO:0005524">
    <property type="term" value="F:ATP binding"/>
    <property type="evidence" value="ECO:0007669"/>
    <property type="project" value="InterPro"/>
</dbReference>
<dbReference type="GO" id="GO:0046872">
    <property type="term" value="F:metal ion binding"/>
    <property type="evidence" value="ECO:0007669"/>
    <property type="project" value="TreeGrafter"/>
</dbReference>
<dbReference type="GO" id="GO:0044183">
    <property type="term" value="F:protein folding chaperone"/>
    <property type="evidence" value="ECO:0007669"/>
    <property type="project" value="InterPro"/>
</dbReference>
<dbReference type="GO" id="GO:0051087">
    <property type="term" value="F:protein-folding chaperone binding"/>
    <property type="evidence" value="ECO:0007669"/>
    <property type="project" value="TreeGrafter"/>
</dbReference>
<dbReference type="GO" id="GO:0051082">
    <property type="term" value="F:unfolded protein binding"/>
    <property type="evidence" value="ECO:0007669"/>
    <property type="project" value="TreeGrafter"/>
</dbReference>
<dbReference type="GO" id="GO:0051085">
    <property type="term" value="P:chaperone cofactor-dependent protein refolding"/>
    <property type="evidence" value="ECO:0007669"/>
    <property type="project" value="TreeGrafter"/>
</dbReference>
<dbReference type="CDD" id="cd00320">
    <property type="entry name" value="cpn10"/>
    <property type="match status" value="1"/>
</dbReference>
<dbReference type="FunFam" id="2.30.33.40:FF:000001">
    <property type="entry name" value="10 kDa chaperonin"/>
    <property type="match status" value="1"/>
</dbReference>
<dbReference type="Gene3D" id="2.30.33.40">
    <property type="entry name" value="GroES chaperonin"/>
    <property type="match status" value="1"/>
</dbReference>
<dbReference type="HAMAP" id="MF_00580">
    <property type="entry name" value="CH10"/>
    <property type="match status" value="1"/>
</dbReference>
<dbReference type="InterPro" id="IPR020818">
    <property type="entry name" value="Chaperonin_GroES"/>
</dbReference>
<dbReference type="InterPro" id="IPR037124">
    <property type="entry name" value="Chaperonin_GroES_sf"/>
</dbReference>
<dbReference type="InterPro" id="IPR018369">
    <property type="entry name" value="Chaprnonin_Cpn10_CS"/>
</dbReference>
<dbReference type="InterPro" id="IPR011032">
    <property type="entry name" value="GroES-like_sf"/>
</dbReference>
<dbReference type="NCBIfam" id="NF001526">
    <property type="entry name" value="PRK00364.1-1"/>
    <property type="match status" value="1"/>
</dbReference>
<dbReference type="NCBIfam" id="NF001527">
    <property type="entry name" value="PRK00364.1-2"/>
    <property type="match status" value="1"/>
</dbReference>
<dbReference type="NCBIfam" id="NF001531">
    <property type="entry name" value="PRK00364.2-2"/>
    <property type="match status" value="1"/>
</dbReference>
<dbReference type="PANTHER" id="PTHR10772">
    <property type="entry name" value="10 KDA HEAT SHOCK PROTEIN"/>
    <property type="match status" value="1"/>
</dbReference>
<dbReference type="PANTHER" id="PTHR10772:SF58">
    <property type="entry name" value="CO-CHAPERONIN GROES"/>
    <property type="match status" value="1"/>
</dbReference>
<dbReference type="Pfam" id="PF00166">
    <property type="entry name" value="Cpn10"/>
    <property type="match status" value="1"/>
</dbReference>
<dbReference type="PRINTS" id="PR00297">
    <property type="entry name" value="CHAPERONIN10"/>
</dbReference>
<dbReference type="SMART" id="SM00883">
    <property type="entry name" value="Cpn10"/>
    <property type="match status" value="1"/>
</dbReference>
<dbReference type="SUPFAM" id="SSF50129">
    <property type="entry name" value="GroES-like"/>
    <property type="match status" value="1"/>
</dbReference>
<dbReference type="PROSITE" id="PS00681">
    <property type="entry name" value="CHAPERONINS_CPN10"/>
    <property type="match status" value="1"/>
</dbReference>
<keyword id="KW-0143">Chaperone</keyword>
<keyword id="KW-0963">Cytoplasm</keyword>
<organism>
    <name type="scientific">Shewanella halifaxensis (strain HAW-EB4)</name>
    <dbReference type="NCBI Taxonomy" id="458817"/>
    <lineage>
        <taxon>Bacteria</taxon>
        <taxon>Pseudomonadati</taxon>
        <taxon>Pseudomonadota</taxon>
        <taxon>Gammaproteobacteria</taxon>
        <taxon>Alteromonadales</taxon>
        <taxon>Shewanellaceae</taxon>
        <taxon>Shewanella</taxon>
    </lineage>
</organism>
<gene>
    <name evidence="1" type="primary">groES</name>
    <name evidence="1" type="synonym">groS</name>
    <name type="ordered locus">Shal_3777</name>
</gene>
<proteinExistence type="inferred from homology"/>